<evidence type="ECO:0000255" key="1">
    <source>
        <dbReference type="HAMAP-Rule" id="MF_00061"/>
    </source>
</evidence>
<keyword id="KW-0067">ATP-binding</keyword>
<keyword id="KW-0414">Isoprene biosynthesis</keyword>
<keyword id="KW-0418">Kinase</keyword>
<keyword id="KW-0547">Nucleotide-binding</keyword>
<keyword id="KW-0808">Transferase</keyword>
<organism>
    <name type="scientific">Buchnera aphidicola subsp. Schizaphis graminum (strain Sg)</name>
    <dbReference type="NCBI Taxonomy" id="198804"/>
    <lineage>
        <taxon>Bacteria</taxon>
        <taxon>Pseudomonadati</taxon>
        <taxon>Pseudomonadota</taxon>
        <taxon>Gammaproteobacteria</taxon>
        <taxon>Enterobacterales</taxon>
        <taxon>Erwiniaceae</taxon>
        <taxon>Buchnera</taxon>
    </lineage>
</organism>
<gene>
    <name evidence="1" type="primary">ispE</name>
    <name type="synonym">ipk</name>
    <name type="ordered locus">BUsg_164</name>
</gene>
<feature type="chain" id="PRO_0000189198" description="4-diphosphocytidyl-2-C-methyl-D-erythritol kinase">
    <location>
        <begin position="1"/>
        <end position="292"/>
    </location>
</feature>
<feature type="active site" evidence="1">
    <location>
        <position position="10"/>
    </location>
</feature>
<feature type="active site" evidence="1">
    <location>
        <position position="142"/>
    </location>
</feature>
<feature type="binding site" evidence="1">
    <location>
        <begin position="100"/>
        <end position="110"/>
    </location>
    <ligand>
        <name>ATP</name>
        <dbReference type="ChEBI" id="CHEBI:30616"/>
    </ligand>
</feature>
<proteinExistence type="inferred from homology"/>
<protein>
    <recommendedName>
        <fullName evidence="1">4-diphosphocytidyl-2-C-methyl-D-erythritol kinase</fullName>
        <shortName evidence="1">CMK</shortName>
        <ecNumber evidence="1">2.7.1.148</ecNumber>
    </recommendedName>
    <alternativeName>
        <fullName evidence="1">4-(cytidine-5'-diphospho)-2-C-methyl-D-erythritol kinase</fullName>
    </alternativeName>
</protein>
<name>ISPE_BUCAP</name>
<accession>Q8K9X1</accession>
<comment type="function">
    <text evidence="1">Catalyzes the phosphorylation of the position 2 hydroxy group of 4-diphosphocytidyl-2C-methyl-D-erythritol.</text>
</comment>
<comment type="catalytic activity">
    <reaction evidence="1">
        <text>4-CDP-2-C-methyl-D-erythritol + ATP = 4-CDP-2-C-methyl-D-erythritol 2-phosphate + ADP + H(+)</text>
        <dbReference type="Rhea" id="RHEA:18437"/>
        <dbReference type="ChEBI" id="CHEBI:15378"/>
        <dbReference type="ChEBI" id="CHEBI:30616"/>
        <dbReference type="ChEBI" id="CHEBI:57823"/>
        <dbReference type="ChEBI" id="CHEBI:57919"/>
        <dbReference type="ChEBI" id="CHEBI:456216"/>
        <dbReference type="EC" id="2.7.1.148"/>
    </reaction>
</comment>
<comment type="pathway">
    <text evidence="1">Isoprenoid biosynthesis; isopentenyl diphosphate biosynthesis via DXP pathway; isopentenyl diphosphate from 1-deoxy-D-xylulose 5-phosphate: step 3/6.</text>
</comment>
<comment type="subunit">
    <text evidence="1">Homodimer.</text>
</comment>
<comment type="similarity">
    <text evidence="1">Belongs to the GHMP kinase family. IspE subfamily.</text>
</comment>
<dbReference type="EC" id="2.7.1.148" evidence="1"/>
<dbReference type="EMBL" id="AE013218">
    <property type="protein sequence ID" value="AAM67731.1"/>
    <property type="molecule type" value="Genomic_DNA"/>
</dbReference>
<dbReference type="RefSeq" id="WP_011053698.1">
    <property type="nucleotide sequence ID" value="NC_004061.1"/>
</dbReference>
<dbReference type="SMR" id="Q8K9X1"/>
<dbReference type="STRING" id="198804.BUsg_164"/>
<dbReference type="GeneID" id="93003633"/>
<dbReference type="KEGG" id="bas:BUsg_164"/>
<dbReference type="eggNOG" id="COG1947">
    <property type="taxonomic scope" value="Bacteria"/>
</dbReference>
<dbReference type="HOGENOM" id="CLU_053057_3_0_6"/>
<dbReference type="UniPathway" id="UPA00056">
    <property type="reaction ID" value="UER00094"/>
</dbReference>
<dbReference type="Proteomes" id="UP000000416">
    <property type="component" value="Chromosome"/>
</dbReference>
<dbReference type="GO" id="GO:0050515">
    <property type="term" value="F:4-(cytidine 5'-diphospho)-2-C-methyl-D-erythritol kinase activity"/>
    <property type="evidence" value="ECO:0007669"/>
    <property type="project" value="UniProtKB-UniRule"/>
</dbReference>
<dbReference type="GO" id="GO:0005524">
    <property type="term" value="F:ATP binding"/>
    <property type="evidence" value="ECO:0007669"/>
    <property type="project" value="UniProtKB-UniRule"/>
</dbReference>
<dbReference type="GO" id="GO:0019288">
    <property type="term" value="P:isopentenyl diphosphate biosynthetic process, methylerythritol 4-phosphate pathway"/>
    <property type="evidence" value="ECO:0007669"/>
    <property type="project" value="UniProtKB-UniRule"/>
</dbReference>
<dbReference type="GO" id="GO:0016114">
    <property type="term" value="P:terpenoid biosynthetic process"/>
    <property type="evidence" value="ECO:0007669"/>
    <property type="project" value="InterPro"/>
</dbReference>
<dbReference type="Gene3D" id="3.30.230.10">
    <property type="match status" value="1"/>
</dbReference>
<dbReference type="Gene3D" id="3.30.70.890">
    <property type="entry name" value="GHMP kinase, C-terminal domain"/>
    <property type="match status" value="1"/>
</dbReference>
<dbReference type="HAMAP" id="MF_00061">
    <property type="entry name" value="IspE"/>
    <property type="match status" value="1"/>
</dbReference>
<dbReference type="InterPro" id="IPR013750">
    <property type="entry name" value="GHMP_kinase_C_dom"/>
</dbReference>
<dbReference type="InterPro" id="IPR036554">
    <property type="entry name" value="GHMP_kinase_C_sf"/>
</dbReference>
<dbReference type="InterPro" id="IPR006204">
    <property type="entry name" value="GHMP_kinase_N_dom"/>
</dbReference>
<dbReference type="InterPro" id="IPR004424">
    <property type="entry name" value="IspE"/>
</dbReference>
<dbReference type="InterPro" id="IPR020568">
    <property type="entry name" value="Ribosomal_Su5_D2-typ_SF"/>
</dbReference>
<dbReference type="InterPro" id="IPR014721">
    <property type="entry name" value="Ribsml_uS5_D2-typ_fold_subgr"/>
</dbReference>
<dbReference type="NCBIfam" id="TIGR00154">
    <property type="entry name" value="ispE"/>
    <property type="match status" value="1"/>
</dbReference>
<dbReference type="PANTHER" id="PTHR43527">
    <property type="entry name" value="4-DIPHOSPHOCYTIDYL-2-C-METHYL-D-ERYTHRITOL KINASE, CHLOROPLASTIC"/>
    <property type="match status" value="1"/>
</dbReference>
<dbReference type="PANTHER" id="PTHR43527:SF2">
    <property type="entry name" value="4-DIPHOSPHOCYTIDYL-2-C-METHYL-D-ERYTHRITOL KINASE, CHLOROPLASTIC"/>
    <property type="match status" value="1"/>
</dbReference>
<dbReference type="Pfam" id="PF08544">
    <property type="entry name" value="GHMP_kinases_C"/>
    <property type="match status" value="1"/>
</dbReference>
<dbReference type="Pfam" id="PF00288">
    <property type="entry name" value="GHMP_kinases_N"/>
    <property type="match status" value="1"/>
</dbReference>
<dbReference type="PIRSF" id="PIRSF010376">
    <property type="entry name" value="IspE"/>
    <property type="match status" value="1"/>
</dbReference>
<dbReference type="SUPFAM" id="SSF55060">
    <property type="entry name" value="GHMP Kinase, C-terminal domain"/>
    <property type="match status" value="1"/>
</dbReference>
<dbReference type="SUPFAM" id="SSF54211">
    <property type="entry name" value="Ribosomal protein S5 domain 2-like"/>
    <property type="match status" value="1"/>
</dbReference>
<reference key="1">
    <citation type="journal article" date="2002" name="Science">
        <title>50 million years of genomic stasis in endosymbiotic bacteria.</title>
        <authorList>
            <person name="Tamas I."/>
            <person name="Klasson L."/>
            <person name="Canbaeck B."/>
            <person name="Naeslund A.K."/>
            <person name="Eriksson A.-S."/>
            <person name="Wernegreen J.J."/>
            <person name="Sandstroem J.P."/>
            <person name="Moran N.A."/>
            <person name="Andersson S.G.E."/>
        </authorList>
    </citation>
    <scope>NUCLEOTIDE SEQUENCE [LARGE SCALE GENOMIC DNA]</scope>
    <source>
        <strain>Sg</strain>
    </source>
</reference>
<sequence>MINTWPSPAKINLFLYVTGIRSDGYHYIQSLFQFLNYGDTLTIIPNTKGTIELFTESNSLVNIKNSIITAAELLKEKALHSLGKKTSHFGAKIFLNKKIPIGSGLGGGSSNAATTLVVLNNLWKTKFTLQELAELSLKIGSDIPAFIMGKTTIVEGIGEILYPIHRKEKWYLIVYPNISISTKNIFSIYSIKKNTIKKPIDFLLRSRFHNDFENVIKKKFKKIKQLISMLSLYAPSRITGTGSCIFAEFNDKKSAQKIHSLLPHNVQGTIVKSVNVSPLHHAFYKKNINLFN</sequence>